<sequence>MALKDLPAQAQPREKLAARGPSALSDIELLAIVLRTGMAGKGVLQLAQELLQLPGRAGLSGLLQAGHADLKAIKGLGPSKCAQLLAVLELARRAMAEQLRERPALASPEAVARYLQLHLAARQHEVFAVLFLDGQHRLIALEEMFRGTLTRTSVYPREVVLRALHHHAGAVILAHNHPSGQVQASAADKAVTQNLQAALRLVDIQVLDHVIVAPGASLSMAGQGML</sequence>
<name>Y1904_DELAS</name>
<comment type="similarity">
    <text evidence="2">Belongs to the UPF0758 family.</text>
</comment>
<keyword id="KW-0378">Hydrolase</keyword>
<keyword id="KW-0479">Metal-binding</keyword>
<keyword id="KW-0482">Metalloprotease</keyword>
<keyword id="KW-0645">Protease</keyword>
<keyword id="KW-1185">Reference proteome</keyword>
<keyword id="KW-0862">Zinc</keyword>
<protein>
    <recommendedName>
        <fullName>UPF0758 protein Daci_1904</fullName>
    </recommendedName>
</protein>
<feature type="chain" id="PRO_1000089812" description="UPF0758 protein Daci_1904">
    <location>
        <begin position="1"/>
        <end position="226"/>
    </location>
</feature>
<feature type="domain" description="MPN" evidence="1">
    <location>
        <begin position="104"/>
        <end position="226"/>
    </location>
</feature>
<feature type="short sequence motif" description="JAMM motif" evidence="1">
    <location>
        <begin position="175"/>
        <end position="188"/>
    </location>
</feature>
<feature type="binding site" evidence="1">
    <location>
        <position position="175"/>
    </location>
    <ligand>
        <name>Zn(2+)</name>
        <dbReference type="ChEBI" id="CHEBI:29105"/>
        <note>catalytic</note>
    </ligand>
</feature>
<feature type="binding site" evidence="1">
    <location>
        <position position="177"/>
    </location>
    <ligand>
        <name>Zn(2+)</name>
        <dbReference type="ChEBI" id="CHEBI:29105"/>
        <note>catalytic</note>
    </ligand>
</feature>
<feature type="binding site" evidence="1">
    <location>
        <position position="188"/>
    </location>
    <ligand>
        <name>Zn(2+)</name>
        <dbReference type="ChEBI" id="CHEBI:29105"/>
        <note>catalytic</note>
    </ligand>
</feature>
<accession>A9BYK1</accession>
<proteinExistence type="inferred from homology"/>
<gene>
    <name type="ordered locus">Daci_1904</name>
</gene>
<reference key="1">
    <citation type="submission" date="2007-11" db="EMBL/GenBank/DDBJ databases">
        <title>Complete sequence of Delftia acidovorans DSM 14801 / SPH-1.</title>
        <authorList>
            <person name="Copeland A."/>
            <person name="Lucas S."/>
            <person name="Lapidus A."/>
            <person name="Barry K."/>
            <person name="Glavina del Rio T."/>
            <person name="Dalin E."/>
            <person name="Tice H."/>
            <person name="Pitluck S."/>
            <person name="Lowry S."/>
            <person name="Clum A."/>
            <person name="Schmutz J."/>
            <person name="Larimer F."/>
            <person name="Land M."/>
            <person name="Hauser L."/>
            <person name="Kyrpides N."/>
            <person name="Kim E."/>
            <person name="Schleheck D."/>
            <person name="Richardson P."/>
        </authorList>
    </citation>
    <scope>NUCLEOTIDE SEQUENCE [LARGE SCALE GENOMIC DNA]</scope>
    <source>
        <strain>DSM 14801 / SPH-1</strain>
    </source>
</reference>
<evidence type="ECO:0000255" key="1">
    <source>
        <dbReference type="PROSITE-ProRule" id="PRU01182"/>
    </source>
</evidence>
<evidence type="ECO:0000305" key="2"/>
<organism>
    <name type="scientific">Delftia acidovorans (strain DSM 14801 / SPH-1)</name>
    <dbReference type="NCBI Taxonomy" id="398578"/>
    <lineage>
        <taxon>Bacteria</taxon>
        <taxon>Pseudomonadati</taxon>
        <taxon>Pseudomonadota</taxon>
        <taxon>Betaproteobacteria</taxon>
        <taxon>Burkholderiales</taxon>
        <taxon>Comamonadaceae</taxon>
        <taxon>Delftia</taxon>
    </lineage>
</organism>
<dbReference type="EMBL" id="CP000884">
    <property type="protein sequence ID" value="ABX34544.1"/>
    <property type="molecule type" value="Genomic_DNA"/>
</dbReference>
<dbReference type="SMR" id="A9BYK1"/>
<dbReference type="STRING" id="398578.Daci_1904"/>
<dbReference type="GeneID" id="24117904"/>
<dbReference type="KEGG" id="dac:Daci_1904"/>
<dbReference type="eggNOG" id="COG2003">
    <property type="taxonomic scope" value="Bacteria"/>
</dbReference>
<dbReference type="HOGENOM" id="CLU_073529_0_1_4"/>
<dbReference type="Proteomes" id="UP000000784">
    <property type="component" value="Chromosome"/>
</dbReference>
<dbReference type="GO" id="GO:0046872">
    <property type="term" value="F:metal ion binding"/>
    <property type="evidence" value="ECO:0007669"/>
    <property type="project" value="UniProtKB-KW"/>
</dbReference>
<dbReference type="GO" id="GO:0008237">
    <property type="term" value="F:metallopeptidase activity"/>
    <property type="evidence" value="ECO:0007669"/>
    <property type="project" value="UniProtKB-KW"/>
</dbReference>
<dbReference type="GO" id="GO:0006508">
    <property type="term" value="P:proteolysis"/>
    <property type="evidence" value="ECO:0007669"/>
    <property type="project" value="UniProtKB-KW"/>
</dbReference>
<dbReference type="CDD" id="cd08071">
    <property type="entry name" value="MPN_DUF2466"/>
    <property type="match status" value="1"/>
</dbReference>
<dbReference type="Gene3D" id="3.40.140.10">
    <property type="entry name" value="Cytidine Deaminase, domain 2"/>
    <property type="match status" value="1"/>
</dbReference>
<dbReference type="InterPro" id="IPR037518">
    <property type="entry name" value="MPN"/>
</dbReference>
<dbReference type="InterPro" id="IPR025657">
    <property type="entry name" value="RadC_JAB"/>
</dbReference>
<dbReference type="InterPro" id="IPR010994">
    <property type="entry name" value="RuvA_2-like"/>
</dbReference>
<dbReference type="InterPro" id="IPR001405">
    <property type="entry name" value="UPF0758"/>
</dbReference>
<dbReference type="InterPro" id="IPR020891">
    <property type="entry name" value="UPF0758_CS"/>
</dbReference>
<dbReference type="InterPro" id="IPR046778">
    <property type="entry name" value="UPF0758_N"/>
</dbReference>
<dbReference type="NCBIfam" id="NF000642">
    <property type="entry name" value="PRK00024.1"/>
    <property type="match status" value="1"/>
</dbReference>
<dbReference type="NCBIfam" id="TIGR00608">
    <property type="entry name" value="radc"/>
    <property type="match status" value="1"/>
</dbReference>
<dbReference type="PANTHER" id="PTHR30471">
    <property type="entry name" value="DNA REPAIR PROTEIN RADC"/>
    <property type="match status" value="1"/>
</dbReference>
<dbReference type="PANTHER" id="PTHR30471:SF3">
    <property type="entry name" value="UPF0758 PROTEIN YEES-RELATED"/>
    <property type="match status" value="1"/>
</dbReference>
<dbReference type="Pfam" id="PF04002">
    <property type="entry name" value="RadC"/>
    <property type="match status" value="1"/>
</dbReference>
<dbReference type="Pfam" id="PF20582">
    <property type="entry name" value="UPF0758_N"/>
    <property type="match status" value="1"/>
</dbReference>
<dbReference type="SUPFAM" id="SSF47781">
    <property type="entry name" value="RuvA domain 2-like"/>
    <property type="match status" value="1"/>
</dbReference>
<dbReference type="PROSITE" id="PS50249">
    <property type="entry name" value="MPN"/>
    <property type="match status" value="1"/>
</dbReference>
<dbReference type="PROSITE" id="PS01302">
    <property type="entry name" value="UPF0758"/>
    <property type="match status" value="1"/>
</dbReference>